<proteinExistence type="inferred from homology"/>
<sequence length="385" mass="43024">MKNITILGATGSIGTQTLDVIRKEKEELKLVAISANKSYKKVIEIIKEFKPKYAVLMEENAFKIVEDFCVNSKIDTKVLKGMEGMIYISTLEEINTVVTSVVGMIGLVPTIKAIESGKDIALANKETLVVAGELVISKAKEHNVNILPVDSEHGAIFQCLRGNKKEEVKNIIVTASGGPFRGRKKEELIDIKPEHALKHPKWNMGRKISIDSATLMNKGLEVIEAHFLFGVDYENIKVVVHPQSIVHSMVEYKDGSVIAQMATPDMKLPIQYALNYPNRKESQIEPLDFYKISNLTFEKPDMDTFLPLKLAYEAGKKGGVMPAILNGANEVAVDLFLKGKIEFLQIGDLLQECMNKFYKSMEATLENVISVDKEVREYLGKKYDI</sequence>
<gene>
    <name evidence="1" type="primary">dxr</name>
    <name type="ordered locus">CLJ_B2651</name>
</gene>
<evidence type="ECO:0000255" key="1">
    <source>
        <dbReference type="HAMAP-Rule" id="MF_00183"/>
    </source>
</evidence>
<name>DXR_CLOB6</name>
<feature type="chain" id="PRO_1000203883" description="1-deoxy-D-xylulose 5-phosphate reductoisomerase">
    <location>
        <begin position="1"/>
        <end position="385"/>
    </location>
</feature>
<feature type="binding site" evidence="1">
    <location>
        <position position="10"/>
    </location>
    <ligand>
        <name>NADPH</name>
        <dbReference type="ChEBI" id="CHEBI:57783"/>
    </ligand>
</feature>
<feature type="binding site" evidence="1">
    <location>
        <position position="11"/>
    </location>
    <ligand>
        <name>NADPH</name>
        <dbReference type="ChEBI" id="CHEBI:57783"/>
    </ligand>
</feature>
<feature type="binding site" evidence="1">
    <location>
        <position position="12"/>
    </location>
    <ligand>
        <name>NADPH</name>
        <dbReference type="ChEBI" id="CHEBI:57783"/>
    </ligand>
</feature>
<feature type="binding site" evidence="1">
    <location>
        <position position="13"/>
    </location>
    <ligand>
        <name>NADPH</name>
        <dbReference type="ChEBI" id="CHEBI:57783"/>
    </ligand>
</feature>
<feature type="binding site" evidence="1">
    <location>
        <position position="37"/>
    </location>
    <ligand>
        <name>NADPH</name>
        <dbReference type="ChEBI" id="CHEBI:57783"/>
    </ligand>
</feature>
<feature type="binding site" evidence="1">
    <location>
        <position position="124"/>
    </location>
    <ligand>
        <name>NADPH</name>
        <dbReference type="ChEBI" id="CHEBI:57783"/>
    </ligand>
</feature>
<feature type="binding site" evidence="1">
    <location>
        <position position="125"/>
    </location>
    <ligand>
        <name>1-deoxy-D-xylulose 5-phosphate</name>
        <dbReference type="ChEBI" id="CHEBI:57792"/>
    </ligand>
</feature>
<feature type="binding site" evidence="1">
    <location>
        <position position="126"/>
    </location>
    <ligand>
        <name>NADPH</name>
        <dbReference type="ChEBI" id="CHEBI:57783"/>
    </ligand>
</feature>
<feature type="binding site" evidence="1">
    <location>
        <position position="150"/>
    </location>
    <ligand>
        <name>Mn(2+)</name>
        <dbReference type="ChEBI" id="CHEBI:29035"/>
    </ligand>
</feature>
<feature type="binding site" evidence="1">
    <location>
        <position position="151"/>
    </location>
    <ligand>
        <name>1-deoxy-D-xylulose 5-phosphate</name>
        <dbReference type="ChEBI" id="CHEBI:57792"/>
    </ligand>
</feature>
<feature type="binding site" evidence="1">
    <location>
        <position position="152"/>
    </location>
    <ligand>
        <name>1-deoxy-D-xylulose 5-phosphate</name>
        <dbReference type="ChEBI" id="CHEBI:57792"/>
    </ligand>
</feature>
<feature type="binding site" evidence="1">
    <location>
        <position position="152"/>
    </location>
    <ligand>
        <name>Mn(2+)</name>
        <dbReference type="ChEBI" id="CHEBI:29035"/>
    </ligand>
</feature>
<feature type="binding site" evidence="1">
    <location>
        <position position="176"/>
    </location>
    <ligand>
        <name>1-deoxy-D-xylulose 5-phosphate</name>
        <dbReference type="ChEBI" id="CHEBI:57792"/>
    </ligand>
</feature>
<feature type="binding site" evidence="1">
    <location>
        <position position="199"/>
    </location>
    <ligand>
        <name>1-deoxy-D-xylulose 5-phosphate</name>
        <dbReference type="ChEBI" id="CHEBI:57792"/>
    </ligand>
</feature>
<feature type="binding site" evidence="1">
    <location>
        <position position="205"/>
    </location>
    <ligand>
        <name>NADPH</name>
        <dbReference type="ChEBI" id="CHEBI:57783"/>
    </ligand>
</feature>
<feature type="binding site" evidence="1">
    <location>
        <position position="212"/>
    </location>
    <ligand>
        <name>1-deoxy-D-xylulose 5-phosphate</name>
        <dbReference type="ChEBI" id="CHEBI:57792"/>
    </ligand>
</feature>
<feature type="binding site" evidence="1">
    <location>
        <position position="217"/>
    </location>
    <ligand>
        <name>1-deoxy-D-xylulose 5-phosphate</name>
        <dbReference type="ChEBI" id="CHEBI:57792"/>
    </ligand>
</feature>
<feature type="binding site" evidence="1">
    <location>
        <position position="218"/>
    </location>
    <ligand>
        <name>1-deoxy-D-xylulose 5-phosphate</name>
        <dbReference type="ChEBI" id="CHEBI:57792"/>
    </ligand>
</feature>
<feature type="binding site" evidence="1">
    <location>
        <position position="221"/>
    </location>
    <ligand>
        <name>1-deoxy-D-xylulose 5-phosphate</name>
        <dbReference type="ChEBI" id="CHEBI:57792"/>
    </ligand>
</feature>
<feature type="binding site" evidence="1">
    <location>
        <position position="221"/>
    </location>
    <ligand>
        <name>Mn(2+)</name>
        <dbReference type="ChEBI" id="CHEBI:29035"/>
    </ligand>
</feature>
<organism>
    <name type="scientific">Clostridium botulinum (strain 657 / Type Ba4)</name>
    <dbReference type="NCBI Taxonomy" id="515621"/>
    <lineage>
        <taxon>Bacteria</taxon>
        <taxon>Bacillati</taxon>
        <taxon>Bacillota</taxon>
        <taxon>Clostridia</taxon>
        <taxon>Eubacteriales</taxon>
        <taxon>Clostridiaceae</taxon>
        <taxon>Clostridium</taxon>
    </lineage>
</organism>
<dbReference type="EC" id="1.1.1.267" evidence="1"/>
<dbReference type="EMBL" id="CP001083">
    <property type="protein sequence ID" value="ACQ51795.1"/>
    <property type="molecule type" value="Genomic_DNA"/>
</dbReference>
<dbReference type="RefSeq" id="WP_003362568.1">
    <property type="nucleotide sequence ID" value="NC_012658.1"/>
</dbReference>
<dbReference type="SMR" id="C3L0C4"/>
<dbReference type="KEGG" id="cbi:CLJ_B2651"/>
<dbReference type="HOGENOM" id="CLU_035714_4_0_9"/>
<dbReference type="UniPathway" id="UPA00056">
    <property type="reaction ID" value="UER00092"/>
</dbReference>
<dbReference type="Proteomes" id="UP000002333">
    <property type="component" value="Chromosome"/>
</dbReference>
<dbReference type="GO" id="GO:0030604">
    <property type="term" value="F:1-deoxy-D-xylulose-5-phosphate reductoisomerase activity"/>
    <property type="evidence" value="ECO:0007669"/>
    <property type="project" value="UniProtKB-UniRule"/>
</dbReference>
<dbReference type="GO" id="GO:0030145">
    <property type="term" value="F:manganese ion binding"/>
    <property type="evidence" value="ECO:0007669"/>
    <property type="project" value="TreeGrafter"/>
</dbReference>
<dbReference type="GO" id="GO:0070402">
    <property type="term" value="F:NADPH binding"/>
    <property type="evidence" value="ECO:0007669"/>
    <property type="project" value="InterPro"/>
</dbReference>
<dbReference type="GO" id="GO:0051484">
    <property type="term" value="P:isopentenyl diphosphate biosynthetic process, methylerythritol 4-phosphate pathway involved in terpenoid biosynthetic process"/>
    <property type="evidence" value="ECO:0007669"/>
    <property type="project" value="TreeGrafter"/>
</dbReference>
<dbReference type="FunFam" id="3.40.50.720:FF:000045">
    <property type="entry name" value="1-deoxy-D-xylulose 5-phosphate reductoisomerase"/>
    <property type="match status" value="1"/>
</dbReference>
<dbReference type="Gene3D" id="1.10.1740.10">
    <property type="match status" value="1"/>
</dbReference>
<dbReference type="Gene3D" id="3.40.50.720">
    <property type="entry name" value="NAD(P)-binding Rossmann-like Domain"/>
    <property type="match status" value="1"/>
</dbReference>
<dbReference type="HAMAP" id="MF_00183">
    <property type="entry name" value="DXP_reductoisom"/>
    <property type="match status" value="1"/>
</dbReference>
<dbReference type="InterPro" id="IPR003821">
    <property type="entry name" value="DXP_reductoisomerase"/>
</dbReference>
<dbReference type="InterPro" id="IPR013644">
    <property type="entry name" value="DXP_reductoisomerase_C"/>
</dbReference>
<dbReference type="InterPro" id="IPR013512">
    <property type="entry name" value="DXP_reductoisomerase_N"/>
</dbReference>
<dbReference type="InterPro" id="IPR026877">
    <property type="entry name" value="DXPR_C"/>
</dbReference>
<dbReference type="InterPro" id="IPR036169">
    <property type="entry name" value="DXPR_C_sf"/>
</dbReference>
<dbReference type="InterPro" id="IPR036291">
    <property type="entry name" value="NAD(P)-bd_dom_sf"/>
</dbReference>
<dbReference type="NCBIfam" id="TIGR00243">
    <property type="entry name" value="Dxr"/>
    <property type="match status" value="1"/>
</dbReference>
<dbReference type="NCBIfam" id="NF009114">
    <property type="entry name" value="PRK12464.1"/>
    <property type="match status" value="1"/>
</dbReference>
<dbReference type="PANTHER" id="PTHR30525">
    <property type="entry name" value="1-DEOXY-D-XYLULOSE 5-PHOSPHATE REDUCTOISOMERASE"/>
    <property type="match status" value="1"/>
</dbReference>
<dbReference type="PANTHER" id="PTHR30525:SF0">
    <property type="entry name" value="1-DEOXY-D-XYLULOSE 5-PHOSPHATE REDUCTOISOMERASE, CHLOROPLASTIC"/>
    <property type="match status" value="1"/>
</dbReference>
<dbReference type="Pfam" id="PF08436">
    <property type="entry name" value="DXP_redisom_C"/>
    <property type="match status" value="1"/>
</dbReference>
<dbReference type="Pfam" id="PF02670">
    <property type="entry name" value="DXP_reductoisom"/>
    <property type="match status" value="1"/>
</dbReference>
<dbReference type="Pfam" id="PF13288">
    <property type="entry name" value="DXPR_C"/>
    <property type="match status" value="1"/>
</dbReference>
<dbReference type="PIRSF" id="PIRSF006205">
    <property type="entry name" value="Dxp_reductismrs"/>
    <property type="match status" value="1"/>
</dbReference>
<dbReference type="SUPFAM" id="SSF69055">
    <property type="entry name" value="1-deoxy-D-xylulose-5-phosphate reductoisomerase, C-terminal domain"/>
    <property type="match status" value="1"/>
</dbReference>
<dbReference type="SUPFAM" id="SSF55347">
    <property type="entry name" value="Glyceraldehyde-3-phosphate dehydrogenase-like, C-terminal domain"/>
    <property type="match status" value="1"/>
</dbReference>
<dbReference type="SUPFAM" id="SSF51735">
    <property type="entry name" value="NAD(P)-binding Rossmann-fold domains"/>
    <property type="match status" value="1"/>
</dbReference>
<comment type="function">
    <text evidence="1">Catalyzes the NADPH-dependent rearrangement and reduction of 1-deoxy-D-xylulose-5-phosphate (DXP) to 2-C-methyl-D-erythritol 4-phosphate (MEP).</text>
</comment>
<comment type="catalytic activity">
    <reaction evidence="1">
        <text>2-C-methyl-D-erythritol 4-phosphate + NADP(+) = 1-deoxy-D-xylulose 5-phosphate + NADPH + H(+)</text>
        <dbReference type="Rhea" id="RHEA:13717"/>
        <dbReference type="ChEBI" id="CHEBI:15378"/>
        <dbReference type="ChEBI" id="CHEBI:57783"/>
        <dbReference type="ChEBI" id="CHEBI:57792"/>
        <dbReference type="ChEBI" id="CHEBI:58262"/>
        <dbReference type="ChEBI" id="CHEBI:58349"/>
        <dbReference type="EC" id="1.1.1.267"/>
    </reaction>
    <physiologicalReaction direction="right-to-left" evidence="1">
        <dbReference type="Rhea" id="RHEA:13719"/>
    </physiologicalReaction>
</comment>
<comment type="cofactor">
    <cofactor evidence="1">
        <name>Mg(2+)</name>
        <dbReference type="ChEBI" id="CHEBI:18420"/>
    </cofactor>
    <cofactor evidence="1">
        <name>Mn(2+)</name>
        <dbReference type="ChEBI" id="CHEBI:29035"/>
    </cofactor>
</comment>
<comment type="pathway">
    <text evidence="1">Isoprenoid biosynthesis; isopentenyl diphosphate biosynthesis via DXP pathway; isopentenyl diphosphate from 1-deoxy-D-xylulose 5-phosphate: step 1/6.</text>
</comment>
<comment type="similarity">
    <text evidence="1">Belongs to the DXR family.</text>
</comment>
<protein>
    <recommendedName>
        <fullName evidence="1">1-deoxy-D-xylulose 5-phosphate reductoisomerase</fullName>
        <shortName evidence="1">DXP reductoisomerase</shortName>
        <ecNumber evidence="1">1.1.1.267</ecNumber>
    </recommendedName>
    <alternativeName>
        <fullName evidence="1">1-deoxyxylulose-5-phosphate reductoisomerase</fullName>
    </alternativeName>
    <alternativeName>
        <fullName evidence="1">2-C-methyl-D-erythritol 4-phosphate synthase</fullName>
    </alternativeName>
</protein>
<keyword id="KW-0414">Isoprene biosynthesis</keyword>
<keyword id="KW-0464">Manganese</keyword>
<keyword id="KW-0479">Metal-binding</keyword>
<keyword id="KW-0521">NADP</keyword>
<keyword id="KW-0560">Oxidoreductase</keyword>
<reference key="1">
    <citation type="submission" date="2008-05" db="EMBL/GenBank/DDBJ databases">
        <title>Genome sequence of Clostridium botulinum Ba4 strain 657.</title>
        <authorList>
            <person name="Shrivastava S."/>
            <person name="Brown J.L."/>
            <person name="Bruce D."/>
            <person name="Detter C."/>
            <person name="Munk C."/>
            <person name="Smith L.A."/>
            <person name="Smith T.J."/>
            <person name="Sutton G."/>
            <person name="Brettin T.S."/>
        </authorList>
    </citation>
    <scope>NUCLEOTIDE SEQUENCE [LARGE SCALE GENOMIC DNA]</scope>
    <source>
        <strain>657 / Type Ba4</strain>
    </source>
</reference>
<accession>C3L0C4</accession>